<proteinExistence type="inferred from homology"/>
<organism>
    <name type="scientific">Bradyrhizobium sp. (strain ORS 278)</name>
    <dbReference type="NCBI Taxonomy" id="114615"/>
    <lineage>
        <taxon>Bacteria</taxon>
        <taxon>Pseudomonadati</taxon>
        <taxon>Pseudomonadota</taxon>
        <taxon>Alphaproteobacteria</taxon>
        <taxon>Hyphomicrobiales</taxon>
        <taxon>Nitrobacteraceae</taxon>
        <taxon>Bradyrhizobium</taxon>
    </lineage>
</organism>
<keyword id="KW-0963">Cytoplasm</keyword>
<keyword id="KW-0251">Elongation factor</keyword>
<keyword id="KW-0648">Protein biosynthesis</keyword>
<keyword id="KW-1185">Reference proteome</keyword>
<evidence type="ECO:0000255" key="1">
    <source>
        <dbReference type="HAMAP-Rule" id="MF_00050"/>
    </source>
</evidence>
<name>EFTS_BRASO</name>
<gene>
    <name evidence="1" type="primary">tsf</name>
    <name type="ordered locus">BRADO4139</name>
</gene>
<dbReference type="EMBL" id="CU234118">
    <property type="protein sequence ID" value="CAL77891.1"/>
    <property type="molecule type" value="Genomic_DNA"/>
</dbReference>
<dbReference type="RefSeq" id="WP_011927019.1">
    <property type="nucleotide sequence ID" value="NC_009445.1"/>
</dbReference>
<dbReference type="SMR" id="A4YVG5"/>
<dbReference type="STRING" id="114615.BRADO4139"/>
<dbReference type="KEGG" id="bra:BRADO4139"/>
<dbReference type="eggNOG" id="COG0264">
    <property type="taxonomic scope" value="Bacteria"/>
</dbReference>
<dbReference type="HOGENOM" id="CLU_047155_2_0_5"/>
<dbReference type="OrthoDB" id="9808348at2"/>
<dbReference type="Proteomes" id="UP000001994">
    <property type="component" value="Chromosome"/>
</dbReference>
<dbReference type="GO" id="GO:0005737">
    <property type="term" value="C:cytoplasm"/>
    <property type="evidence" value="ECO:0007669"/>
    <property type="project" value="UniProtKB-SubCell"/>
</dbReference>
<dbReference type="GO" id="GO:0003746">
    <property type="term" value="F:translation elongation factor activity"/>
    <property type="evidence" value="ECO:0007669"/>
    <property type="project" value="UniProtKB-UniRule"/>
</dbReference>
<dbReference type="CDD" id="cd14275">
    <property type="entry name" value="UBA_EF-Ts"/>
    <property type="match status" value="1"/>
</dbReference>
<dbReference type="FunFam" id="1.10.286.20:FF:000001">
    <property type="entry name" value="Elongation factor Ts"/>
    <property type="match status" value="1"/>
</dbReference>
<dbReference type="FunFam" id="1.10.8.10:FF:000001">
    <property type="entry name" value="Elongation factor Ts"/>
    <property type="match status" value="1"/>
</dbReference>
<dbReference type="Gene3D" id="1.10.286.20">
    <property type="match status" value="1"/>
</dbReference>
<dbReference type="Gene3D" id="1.10.8.10">
    <property type="entry name" value="DNA helicase RuvA subunit, C-terminal domain"/>
    <property type="match status" value="1"/>
</dbReference>
<dbReference type="Gene3D" id="3.30.479.20">
    <property type="entry name" value="Elongation factor Ts, dimerisation domain"/>
    <property type="match status" value="2"/>
</dbReference>
<dbReference type="HAMAP" id="MF_00050">
    <property type="entry name" value="EF_Ts"/>
    <property type="match status" value="1"/>
</dbReference>
<dbReference type="InterPro" id="IPR036402">
    <property type="entry name" value="EF-Ts_dimer_sf"/>
</dbReference>
<dbReference type="InterPro" id="IPR001816">
    <property type="entry name" value="Transl_elong_EFTs/EF1B"/>
</dbReference>
<dbReference type="InterPro" id="IPR014039">
    <property type="entry name" value="Transl_elong_EFTs/EF1B_dimer"/>
</dbReference>
<dbReference type="InterPro" id="IPR018101">
    <property type="entry name" value="Transl_elong_Ts_CS"/>
</dbReference>
<dbReference type="InterPro" id="IPR009060">
    <property type="entry name" value="UBA-like_sf"/>
</dbReference>
<dbReference type="NCBIfam" id="TIGR00116">
    <property type="entry name" value="tsf"/>
    <property type="match status" value="1"/>
</dbReference>
<dbReference type="PANTHER" id="PTHR11741">
    <property type="entry name" value="ELONGATION FACTOR TS"/>
    <property type="match status" value="1"/>
</dbReference>
<dbReference type="PANTHER" id="PTHR11741:SF0">
    <property type="entry name" value="ELONGATION FACTOR TS, MITOCHONDRIAL"/>
    <property type="match status" value="1"/>
</dbReference>
<dbReference type="Pfam" id="PF00889">
    <property type="entry name" value="EF_TS"/>
    <property type="match status" value="1"/>
</dbReference>
<dbReference type="SUPFAM" id="SSF54713">
    <property type="entry name" value="Elongation factor Ts (EF-Ts), dimerisation domain"/>
    <property type="match status" value="2"/>
</dbReference>
<dbReference type="SUPFAM" id="SSF46934">
    <property type="entry name" value="UBA-like"/>
    <property type="match status" value="1"/>
</dbReference>
<dbReference type="PROSITE" id="PS01127">
    <property type="entry name" value="EF_TS_2"/>
    <property type="match status" value="1"/>
</dbReference>
<protein>
    <recommendedName>
        <fullName evidence="1">Elongation factor Ts</fullName>
        <shortName evidence="1">EF-Ts</shortName>
    </recommendedName>
</protein>
<sequence>MANITAAMVKDLRESTGAGMMDCKAALTETGGDMQAAQDWLRKKGLSKAAKKAGRVAAEGLIGALTSGKKGVVVEVNSETDFVARNEHFQGLVKMIAQVALDVGADVEKIKAAKVGSITVEAAIADSIATIGENQSLRRAAALEVSEGVVASYVHGAVIEGAGKLGVIVALESPGKTDELAALGRQLAMHVAAANPQAIDAAGLDPEVVKREKDVLSDKYRQQGKPENVIEKIVESGLKTYYKEVTLLEQAFIHDSGKSVAQALKEAEGKVGGPIKVAGFVRYALGEGIEKEETDFAAEVAAASGKK</sequence>
<comment type="function">
    <text evidence="1">Associates with the EF-Tu.GDP complex and induces the exchange of GDP to GTP. It remains bound to the aminoacyl-tRNA.EF-Tu.GTP complex up to the GTP hydrolysis stage on the ribosome.</text>
</comment>
<comment type="subcellular location">
    <subcellularLocation>
        <location evidence="1">Cytoplasm</location>
    </subcellularLocation>
</comment>
<comment type="similarity">
    <text evidence="1">Belongs to the EF-Ts family.</text>
</comment>
<accession>A4YVG5</accession>
<feature type="chain" id="PRO_1000006058" description="Elongation factor Ts">
    <location>
        <begin position="1"/>
        <end position="307"/>
    </location>
</feature>
<feature type="region of interest" description="Involved in Mg(2+) ion dislocation from EF-Tu" evidence="1">
    <location>
        <begin position="80"/>
        <end position="83"/>
    </location>
</feature>
<reference key="1">
    <citation type="journal article" date="2007" name="Science">
        <title>Legumes symbioses: absence of nod genes in photosynthetic bradyrhizobia.</title>
        <authorList>
            <person name="Giraud E."/>
            <person name="Moulin L."/>
            <person name="Vallenet D."/>
            <person name="Barbe V."/>
            <person name="Cytryn E."/>
            <person name="Avarre J.-C."/>
            <person name="Jaubert M."/>
            <person name="Simon D."/>
            <person name="Cartieaux F."/>
            <person name="Prin Y."/>
            <person name="Bena G."/>
            <person name="Hannibal L."/>
            <person name="Fardoux J."/>
            <person name="Kojadinovic M."/>
            <person name="Vuillet L."/>
            <person name="Lajus A."/>
            <person name="Cruveiller S."/>
            <person name="Rouy Z."/>
            <person name="Mangenot S."/>
            <person name="Segurens B."/>
            <person name="Dossat C."/>
            <person name="Franck W.L."/>
            <person name="Chang W.-S."/>
            <person name="Saunders E."/>
            <person name="Bruce D."/>
            <person name="Richardson P."/>
            <person name="Normand P."/>
            <person name="Dreyfus B."/>
            <person name="Pignol D."/>
            <person name="Stacey G."/>
            <person name="Emerich D."/>
            <person name="Vermeglio A."/>
            <person name="Medigue C."/>
            <person name="Sadowsky M."/>
        </authorList>
    </citation>
    <scope>NUCLEOTIDE SEQUENCE [LARGE SCALE GENOMIC DNA]</scope>
    <source>
        <strain>ORS 278</strain>
    </source>
</reference>